<gene>
    <name evidence="1" type="primary">rlmN</name>
    <name type="ordered locus">VCM66_0715</name>
</gene>
<reference key="1">
    <citation type="journal article" date="2008" name="PLoS ONE">
        <title>A recalibrated molecular clock and independent origins for the cholera pandemic clones.</title>
        <authorList>
            <person name="Feng L."/>
            <person name="Reeves P.R."/>
            <person name="Lan R."/>
            <person name="Ren Y."/>
            <person name="Gao C."/>
            <person name="Zhou Z."/>
            <person name="Ren Y."/>
            <person name="Cheng J."/>
            <person name="Wang W."/>
            <person name="Wang J."/>
            <person name="Qian W."/>
            <person name="Li D."/>
            <person name="Wang L."/>
        </authorList>
    </citation>
    <scope>NUCLEOTIDE SEQUENCE [LARGE SCALE GENOMIC DNA]</scope>
    <source>
        <strain>M66-2</strain>
    </source>
</reference>
<proteinExistence type="inferred from homology"/>
<dbReference type="EC" id="2.1.1.192" evidence="1"/>
<dbReference type="EMBL" id="CP001233">
    <property type="protein sequence ID" value="ACP05036.1"/>
    <property type="molecule type" value="Genomic_DNA"/>
</dbReference>
<dbReference type="RefSeq" id="WP_000206077.1">
    <property type="nucleotide sequence ID" value="NC_012578.1"/>
</dbReference>
<dbReference type="SMR" id="C3LT10"/>
<dbReference type="KEGG" id="vcm:VCM66_0715"/>
<dbReference type="HOGENOM" id="CLU_029101_0_0_6"/>
<dbReference type="Proteomes" id="UP000001217">
    <property type="component" value="Chromosome I"/>
</dbReference>
<dbReference type="GO" id="GO:0005737">
    <property type="term" value="C:cytoplasm"/>
    <property type="evidence" value="ECO:0007669"/>
    <property type="project" value="UniProtKB-SubCell"/>
</dbReference>
<dbReference type="GO" id="GO:0051539">
    <property type="term" value="F:4 iron, 4 sulfur cluster binding"/>
    <property type="evidence" value="ECO:0007669"/>
    <property type="project" value="UniProtKB-UniRule"/>
</dbReference>
<dbReference type="GO" id="GO:0046872">
    <property type="term" value="F:metal ion binding"/>
    <property type="evidence" value="ECO:0007669"/>
    <property type="project" value="UniProtKB-KW"/>
</dbReference>
<dbReference type="GO" id="GO:0070040">
    <property type="term" value="F:rRNA (adenine(2503)-C2-)-methyltransferase activity"/>
    <property type="evidence" value="ECO:0007669"/>
    <property type="project" value="UniProtKB-UniRule"/>
</dbReference>
<dbReference type="GO" id="GO:0019843">
    <property type="term" value="F:rRNA binding"/>
    <property type="evidence" value="ECO:0007669"/>
    <property type="project" value="UniProtKB-UniRule"/>
</dbReference>
<dbReference type="GO" id="GO:0002935">
    <property type="term" value="F:tRNA (adenine(37)-C2)-methyltransferase activity"/>
    <property type="evidence" value="ECO:0007669"/>
    <property type="project" value="UniProtKB-UniRule"/>
</dbReference>
<dbReference type="GO" id="GO:0000049">
    <property type="term" value="F:tRNA binding"/>
    <property type="evidence" value="ECO:0007669"/>
    <property type="project" value="UniProtKB-UniRule"/>
</dbReference>
<dbReference type="GO" id="GO:0070475">
    <property type="term" value="P:rRNA base methylation"/>
    <property type="evidence" value="ECO:0007669"/>
    <property type="project" value="UniProtKB-UniRule"/>
</dbReference>
<dbReference type="GO" id="GO:0030488">
    <property type="term" value="P:tRNA methylation"/>
    <property type="evidence" value="ECO:0007669"/>
    <property type="project" value="UniProtKB-UniRule"/>
</dbReference>
<dbReference type="CDD" id="cd01335">
    <property type="entry name" value="Radical_SAM"/>
    <property type="match status" value="1"/>
</dbReference>
<dbReference type="FunFam" id="1.10.150.530:FF:000003">
    <property type="entry name" value="Dual-specificity RNA methyltransferase RlmN"/>
    <property type="match status" value="1"/>
</dbReference>
<dbReference type="FunFam" id="3.20.20.70:FF:000008">
    <property type="entry name" value="Dual-specificity RNA methyltransferase RlmN"/>
    <property type="match status" value="1"/>
</dbReference>
<dbReference type="Gene3D" id="1.10.150.530">
    <property type="match status" value="1"/>
</dbReference>
<dbReference type="Gene3D" id="3.20.20.70">
    <property type="entry name" value="Aldolase class I"/>
    <property type="match status" value="1"/>
</dbReference>
<dbReference type="HAMAP" id="MF_01849">
    <property type="entry name" value="RNA_methyltr_RlmN"/>
    <property type="match status" value="1"/>
</dbReference>
<dbReference type="InterPro" id="IPR013785">
    <property type="entry name" value="Aldolase_TIM"/>
</dbReference>
<dbReference type="InterPro" id="IPR040072">
    <property type="entry name" value="Methyltransferase_A"/>
</dbReference>
<dbReference type="InterPro" id="IPR048641">
    <property type="entry name" value="RlmN_N"/>
</dbReference>
<dbReference type="InterPro" id="IPR027492">
    <property type="entry name" value="RNA_MTrfase_RlmN"/>
</dbReference>
<dbReference type="InterPro" id="IPR004383">
    <property type="entry name" value="rRNA_lsu_MTrfase_RlmN/Cfr"/>
</dbReference>
<dbReference type="InterPro" id="IPR007197">
    <property type="entry name" value="rSAM"/>
</dbReference>
<dbReference type="NCBIfam" id="NF008396">
    <property type="entry name" value="PRK11194.1"/>
    <property type="match status" value="1"/>
</dbReference>
<dbReference type="NCBIfam" id="TIGR00048">
    <property type="entry name" value="rRNA_mod_RlmN"/>
    <property type="match status" value="1"/>
</dbReference>
<dbReference type="PANTHER" id="PTHR30544">
    <property type="entry name" value="23S RRNA METHYLTRANSFERASE"/>
    <property type="match status" value="1"/>
</dbReference>
<dbReference type="PANTHER" id="PTHR30544:SF5">
    <property type="entry name" value="RADICAL SAM CORE DOMAIN-CONTAINING PROTEIN"/>
    <property type="match status" value="1"/>
</dbReference>
<dbReference type="Pfam" id="PF04055">
    <property type="entry name" value="Radical_SAM"/>
    <property type="match status" value="1"/>
</dbReference>
<dbReference type="Pfam" id="PF21016">
    <property type="entry name" value="RlmN_N"/>
    <property type="match status" value="1"/>
</dbReference>
<dbReference type="PIRSF" id="PIRSF006004">
    <property type="entry name" value="CHP00048"/>
    <property type="match status" value="1"/>
</dbReference>
<dbReference type="SFLD" id="SFLDF00275">
    <property type="entry name" value="adenosine_C2_methyltransferase"/>
    <property type="match status" value="1"/>
</dbReference>
<dbReference type="SFLD" id="SFLDS00029">
    <property type="entry name" value="Radical_SAM"/>
    <property type="match status" value="1"/>
</dbReference>
<dbReference type="SUPFAM" id="SSF102114">
    <property type="entry name" value="Radical SAM enzymes"/>
    <property type="match status" value="1"/>
</dbReference>
<dbReference type="PROSITE" id="PS51918">
    <property type="entry name" value="RADICAL_SAM"/>
    <property type="match status" value="1"/>
</dbReference>
<keyword id="KW-0004">4Fe-4S</keyword>
<keyword id="KW-0963">Cytoplasm</keyword>
<keyword id="KW-1015">Disulfide bond</keyword>
<keyword id="KW-0408">Iron</keyword>
<keyword id="KW-0411">Iron-sulfur</keyword>
<keyword id="KW-0479">Metal-binding</keyword>
<keyword id="KW-0489">Methyltransferase</keyword>
<keyword id="KW-0698">rRNA processing</keyword>
<keyword id="KW-0949">S-adenosyl-L-methionine</keyword>
<keyword id="KW-0808">Transferase</keyword>
<keyword id="KW-0819">tRNA processing</keyword>
<comment type="function">
    <text evidence="1">Specifically methylates position 2 of adenine 2503 in 23S rRNA and position 2 of adenine 37 in tRNAs. m2A2503 modification seems to play a crucial role in the proofreading step occurring at the peptidyl transferase center and thus would serve to optimize ribosomal fidelity.</text>
</comment>
<comment type="catalytic activity">
    <reaction evidence="1">
        <text>adenosine(2503) in 23S rRNA + 2 reduced [2Fe-2S]-[ferredoxin] + 2 S-adenosyl-L-methionine = 2-methyladenosine(2503) in 23S rRNA + 5'-deoxyadenosine + L-methionine + 2 oxidized [2Fe-2S]-[ferredoxin] + S-adenosyl-L-homocysteine</text>
        <dbReference type="Rhea" id="RHEA:42916"/>
        <dbReference type="Rhea" id="RHEA-COMP:10000"/>
        <dbReference type="Rhea" id="RHEA-COMP:10001"/>
        <dbReference type="Rhea" id="RHEA-COMP:10152"/>
        <dbReference type="Rhea" id="RHEA-COMP:10282"/>
        <dbReference type="ChEBI" id="CHEBI:17319"/>
        <dbReference type="ChEBI" id="CHEBI:33737"/>
        <dbReference type="ChEBI" id="CHEBI:33738"/>
        <dbReference type="ChEBI" id="CHEBI:57844"/>
        <dbReference type="ChEBI" id="CHEBI:57856"/>
        <dbReference type="ChEBI" id="CHEBI:59789"/>
        <dbReference type="ChEBI" id="CHEBI:74411"/>
        <dbReference type="ChEBI" id="CHEBI:74497"/>
        <dbReference type="EC" id="2.1.1.192"/>
    </reaction>
</comment>
<comment type="catalytic activity">
    <reaction evidence="1">
        <text>adenosine(37) in tRNA + 2 reduced [2Fe-2S]-[ferredoxin] + 2 S-adenosyl-L-methionine = 2-methyladenosine(37) in tRNA + 5'-deoxyadenosine + L-methionine + 2 oxidized [2Fe-2S]-[ferredoxin] + S-adenosyl-L-homocysteine</text>
        <dbReference type="Rhea" id="RHEA:43332"/>
        <dbReference type="Rhea" id="RHEA-COMP:10000"/>
        <dbReference type="Rhea" id="RHEA-COMP:10001"/>
        <dbReference type="Rhea" id="RHEA-COMP:10162"/>
        <dbReference type="Rhea" id="RHEA-COMP:10485"/>
        <dbReference type="ChEBI" id="CHEBI:17319"/>
        <dbReference type="ChEBI" id="CHEBI:33737"/>
        <dbReference type="ChEBI" id="CHEBI:33738"/>
        <dbReference type="ChEBI" id="CHEBI:57844"/>
        <dbReference type="ChEBI" id="CHEBI:57856"/>
        <dbReference type="ChEBI" id="CHEBI:59789"/>
        <dbReference type="ChEBI" id="CHEBI:74411"/>
        <dbReference type="ChEBI" id="CHEBI:74497"/>
        <dbReference type="EC" id="2.1.1.192"/>
    </reaction>
</comment>
<comment type="cofactor">
    <cofactor evidence="1">
        <name>[4Fe-4S] cluster</name>
        <dbReference type="ChEBI" id="CHEBI:49883"/>
    </cofactor>
    <text evidence="1">Binds 1 [4Fe-4S] cluster. The cluster is coordinated with 3 cysteines and an exchangeable S-adenosyl-L-methionine.</text>
</comment>
<comment type="subcellular location">
    <subcellularLocation>
        <location evidence="1">Cytoplasm</location>
    </subcellularLocation>
</comment>
<comment type="miscellaneous">
    <text evidence="1">Reaction proceeds by a ping-pong mechanism involving intermediate methylation of a conserved cysteine residue.</text>
</comment>
<comment type="similarity">
    <text evidence="1">Belongs to the radical SAM superfamily. RlmN family.</text>
</comment>
<protein>
    <recommendedName>
        <fullName evidence="1">Dual-specificity RNA methyltransferase RlmN</fullName>
        <ecNumber evidence="1">2.1.1.192</ecNumber>
    </recommendedName>
    <alternativeName>
        <fullName evidence="1">23S rRNA (adenine(2503)-C(2))-methyltransferase</fullName>
    </alternativeName>
    <alternativeName>
        <fullName evidence="1">23S rRNA m2A2503 methyltransferase</fullName>
    </alternativeName>
    <alternativeName>
        <fullName evidence="1">Ribosomal RNA large subunit methyltransferase N</fullName>
    </alternativeName>
    <alternativeName>
        <fullName evidence="1">tRNA (adenine(37)-C(2))-methyltransferase</fullName>
    </alternativeName>
    <alternativeName>
        <fullName evidence="1">tRNA m2A37 methyltransferase</fullName>
    </alternativeName>
</protein>
<organism>
    <name type="scientific">Vibrio cholerae serotype O1 (strain M66-2)</name>
    <dbReference type="NCBI Taxonomy" id="579112"/>
    <lineage>
        <taxon>Bacteria</taxon>
        <taxon>Pseudomonadati</taxon>
        <taxon>Pseudomonadota</taxon>
        <taxon>Gammaproteobacteria</taxon>
        <taxon>Vibrionales</taxon>
        <taxon>Vibrionaceae</taxon>
        <taxon>Vibrio</taxon>
    </lineage>
</organism>
<feature type="chain" id="PRO_1000188617" description="Dual-specificity RNA methyltransferase RlmN">
    <location>
        <begin position="1"/>
        <end position="373"/>
    </location>
</feature>
<feature type="domain" description="Radical SAM core" evidence="2">
    <location>
        <begin position="100"/>
        <end position="339"/>
    </location>
</feature>
<feature type="active site" description="Proton acceptor" evidence="1">
    <location>
        <position position="94"/>
    </location>
</feature>
<feature type="active site" description="S-methylcysteine intermediate" evidence="1">
    <location>
        <position position="344"/>
    </location>
</feature>
<feature type="binding site" evidence="1">
    <location>
        <position position="114"/>
    </location>
    <ligand>
        <name>[4Fe-4S] cluster</name>
        <dbReference type="ChEBI" id="CHEBI:49883"/>
        <note>4Fe-4S-S-AdoMet</note>
    </ligand>
</feature>
<feature type="binding site" evidence="1">
    <location>
        <position position="118"/>
    </location>
    <ligand>
        <name>[4Fe-4S] cluster</name>
        <dbReference type="ChEBI" id="CHEBI:49883"/>
        <note>4Fe-4S-S-AdoMet</note>
    </ligand>
</feature>
<feature type="binding site" evidence="1">
    <location>
        <position position="121"/>
    </location>
    <ligand>
        <name>[4Fe-4S] cluster</name>
        <dbReference type="ChEBI" id="CHEBI:49883"/>
        <note>4Fe-4S-S-AdoMet</note>
    </ligand>
</feature>
<feature type="binding site" evidence="1">
    <location>
        <begin position="168"/>
        <end position="169"/>
    </location>
    <ligand>
        <name>S-adenosyl-L-methionine</name>
        <dbReference type="ChEBI" id="CHEBI:59789"/>
    </ligand>
</feature>
<feature type="binding site" evidence="1">
    <location>
        <position position="200"/>
    </location>
    <ligand>
        <name>S-adenosyl-L-methionine</name>
        <dbReference type="ChEBI" id="CHEBI:59789"/>
    </ligand>
</feature>
<feature type="binding site" evidence="1">
    <location>
        <begin position="222"/>
        <end position="224"/>
    </location>
    <ligand>
        <name>S-adenosyl-L-methionine</name>
        <dbReference type="ChEBI" id="CHEBI:59789"/>
    </ligand>
</feature>
<feature type="binding site" evidence="1">
    <location>
        <position position="301"/>
    </location>
    <ligand>
        <name>S-adenosyl-L-methionine</name>
        <dbReference type="ChEBI" id="CHEBI:59789"/>
    </ligand>
</feature>
<feature type="disulfide bond" description="(transient)" evidence="1">
    <location>
        <begin position="107"/>
        <end position="344"/>
    </location>
</feature>
<name>RLMN_VIBCM</name>
<accession>C3LT10</accession>
<sequence>MTTEKVNLLDFDRKGLRTFFAEELGEKAFRAEQVMKWIYHFGCDDFDQMNNINKQLREKLKAKCEIRAPYVSEAQHSADGTIKWAMRVGDQDVETVYIPEDDRATLCVSSQVGCALECKFCSTAQQGFNRNLRVSEIIGQVWRAAREIGLEKETGRRPITNVVMMGMGEPLLNMKNLIPALEIMLDDLGFGLSKRRVTVSTSGVVSGLEQMIGQIDVALAISLHAPNDKLRSEIMPINDRWNIEAFLEVVRRYIASSNANRGKVTVEYVLLDHVNDGTEHAHELAELLKGTPCKINLIPFNPYPGSPYKKPSNSRIDRFQKTLMQYEHTVTIRKTRGDDIDAACGQLVGDVIDRTKRTKAKQFDGQAIPVKTL</sequence>
<evidence type="ECO:0000255" key="1">
    <source>
        <dbReference type="HAMAP-Rule" id="MF_01849"/>
    </source>
</evidence>
<evidence type="ECO:0000255" key="2">
    <source>
        <dbReference type="PROSITE-ProRule" id="PRU01266"/>
    </source>
</evidence>